<reference key="1">
    <citation type="journal article" date="2005" name="Nature">
        <title>The genome of the social amoeba Dictyostelium discoideum.</title>
        <authorList>
            <person name="Eichinger L."/>
            <person name="Pachebat J.A."/>
            <person name="Gloeckner G."/>
            <person name="Rajandream M.A."/>
            <person name="Sucgang R."/>
            <person name="Berriman M."/>
            <person name="Song J."/>
            <person name="Olsen R."/>
            <person name="Szafranski K."/>
            <person name="Xu Q."/>
            <person name="Tunggal B."/>
            <person name="Kummerfeld S."/>
            <person name="Madera M."/>
            <person name="Konfortov B.A."/>
            <person name="Rivero F."/>
            <person name="Bankier A.T."/>
            <person name="Lehmann R."/>
            <person name="Hamlin N."/>
            <person name="Davies R."/>
            <person name="Gaudet P."/>
            <person name="Fey P."/>
            <person name="Pilcher K."/>
            <person name="Chen G."/>
            <person name="Saunders D."/>
            <person name="Sodergren E.J."/>
            <person name="Davis P."/>
            <person name="Kerhornou A."/>
            <person name="Nie X."/>
            <person name="Hall N."/>
            <person name="Anjard C."/>
            <person name="Hemphill L."/>
            <person name="Bason N."/>
            <person name="Farbrother P."/>
            <person name="Desany B."/>
            <person name="Just E."/>
            <person name="Morio T."/>
            <person name="Rost R."/>
            <person name="Churcher C.M."/>
            <person name="Cooper J."/>
            <person name="Haydock S."/>
            <person name="van Driessche N."/>
            <person name="Cronin A."/>
            <person name="Goodhead I."/>
            <person name="Muzny D.M."/>
            <person name="Mourier T."/>
            <person name="Pain A."/>
            <person name="Lu M."/>
            <person name="Harper D."/>
            <person name="Lindsay R."/>
            <person name="Hauser H."/>
            <person name="James K.D."/>
            <person name="Quiles M."/>
            <person name="Madan Babu M."/>
            <person name="Saito T."/>
            <person name="Buchrieser C."/>
            <person name="Wardroper A."/>
            <person name="Felder M."/>
            <person name="Thangavelu M."/>
            <person name="Johnson D."/>
            <person name="Knights A."/>
            <person name="Loulseged H."/>
            <person name="Mungall K.L."/>
            <person name="Oliver K."/>
            <person name="Price C."/>
            <person name="Quail M.A."/>
            <person name="Urushihara H."/>
            <person name="Hernandez J."/>
            <person name="Rabbinowitsch E."/>
            <person name="Steffen D."/>
            <person name="Sanders M."/>
            <person name="Ma J."/>
            <person name="Kohara Y."/>
            <person name="Sharp S."/>
            <person name="Simmonds M.N."/>
            <person name="Spiegler S."/>
            <person name="Tivey A."/>
            <person name="Sugano S."/>
            <person name="White B."/>
            <person name="Walker D."/>
            <person name="Woodward J.R."/>
            <person name="Winckler T."/>
            <person name="Tanaka Y."/>
            <person name="Shaulsky G."/>
            <person name="Schleicher M."/>
            <person name="Weinstock G.M."/>
            <person name="Rosenthal A."/>
            <person name="Cox E.C."/>
            <person name="Chisholm R.L."/>
            <person name="Gibbs R.A."/>
            <person name="Loomis W.F."/>
            <person name="Platzer M."/>
            <person name="Kay R.R."/>
            <person name="Williams J.G."/>
            <person name="Dear P.H."/>
            <person name="Noegel A.A."/>
            <person name="Barrell B.G."/>
            <person name="Kuspa A."/>
        </authorList>
    </citation>
    <scope>NUCLEOTIDE SEQUENCE [LARGE SCALE GENOMIC DNA]</scope>
    <source>
        <strain>AX4</strain>
    </source>
</reference>
<reference key="2">
    <citation type="journal article" date="2004" name="Mol. Cell. Proteomics">
        <title>Identification of the linker-SH2 domain of STAT as the origin of the SH2 domain using two-dimensional structural alignment.</title>
        <authorList>
            <person name="Gao Q."/>
            <person name="Hua J."/>
            <person name="Kimura R."/>
            <person name="Headd J.J."/>
            <person name="Fu X.-Y."/>
            <person name="Chin Y.E."/>
        </authorList>
    </citation>
    <scope>IDENTIFICATION</scope>
</reference>
<gene>
    <name type="primary">shkD</name>
    <name type="ORF">DDB_G0281343</name>
</gene>
<dbReference type="EC" id="2.7.11.1"/>
<dbReference type="EMBL" id="AAFI02000040">
    <property type="protein sequence ID" value="EAL66757.1"/>
    <property type="molecule type" value="Genomic_DNA"/>
</dbReference>
<dbReference type="RefSeq" id="XP_640734.1">
    <property type="nucleotide sequence ID" value="XM_635642.1"/>
</dbReference>
<dbReference type="SMR" id="Q54U31"/>
<dbReference type="FunCoup" id="Q54U31">
    <property type="interactions" value="3"/>
</dbReference>
<dbReference type="STRING" id="44689.Q54U31"/>
<dbReference type="PaxDb" id="44689-DDB0230122"/>
<dbReference type="EnsemblProtists" id="EAL66757">
    <property type="protein sequence ID" value="EAL66757"/>
    <property type="gene ID" value="DDB_G0281343"/>
</dbReference>
<dbReference type="GeneID" id="8623010"/>
<dbReference type="KEGG" id="ddi:DDB_G0281343"/>
<dbReference type="dictyBase" id="DDB_G0281343">
    <property type="gene designation" value="shkD"/>
</dbReference>
<dbReference type="VEuPathDB" id="AmoebaDB:DDB_G0281343"/>
<dbReference type="eggNOG" id="KOG0192">
    <property type="taxonomic scope" value="Eukaryota"/>
</dbReference>
<dbReference type="HOGENOM" id="CLU_373607_0_0_1"/>
<dbReference type="InParanoid" id="Q54U31"/>
<dbReference type="OMA" id="KCNDYPL"/>
<dbReference type="PhylomeDB" id="Q54U31"/>
<dbReference type="PRO" id="PR:Q54U31"/>
<dbReference type="Proteomes" id="UP000002195">
    <property type="component" value="Chromosome 3"/>
</dbReference>
<dbReference type="GO" id="GO:0005737">
    <property type="term" value="C:cytoplasm"/>
    <property type="evidence" value="ECO:0000318"/>
    <property type="project" value="GO_Central"/>
</dbReference>
<dbReference type="GO" id="GO:0016020">
    <property type="term" value="C:membrane"/>
    <property type="evidence" value="ECO:0007669"/>
    <property type="project" value="UniProtKB-SubCell"/>
</dbReference>
<dbReference type="GO" id="GO:0005524">
    <property type="term" value="F:ATP binding"/>
    <property type="evidence" value="ECO:0007669"/>
    <property type="project" value="UniProtKB-KW"/>
</dbReference>
<dbReference type="GO" id="GO:0106310">
    <property type="term" value="F:protein serine kinase activity"/>
    <property type="evidence" value="ECO:0007669"/>
    <property type="project" value="RHEA"/>
</dbReference>
<dbReference type="GO" id="GO:0004674">
    <property type="term" value="F:protein serine/threonine kinase activity"/>
    <property type="evidence" value="ECO:0000318"/>
    <property type="project" value="GO_Central"/>
</dbReference>
<dbReference type="GO" id="GO:0004713">
    <property type="term" value="F:protein tyrosine kinase activity"/>
    <property type="evidence" value="ECO:0007669"/>
    <property type="project" value="UniProtKB-KW"/>
</dbReference>
<dbReference type="GO" id="GO:0007165">
    <property type="term" value="P:signal transduction"/>
    <property type="evidence" value="ECO:0000318"/>
    <property type="project" value="GO_Central"/>
</dbReference>
<dbReference type="CDD" id="cd10357">
    <property type="entry name" value="SH2_ShkD_ShkE"/>
    <property type="match status" value="1"/>
</dbReference>
<dbReference type="CDD" id="cd13999">
    <property type="entry name" value="STKc_MAP3K-like"/>
    <property type="match status" value="1"/>
</dbReference>
<dbReference type="FunFam" id="3.30.505.10:FF:000138">
    <property type="entry name" value="Dual specificity protein kinase shkE"/>
    <property type="match status" value="1"/>
</dbReference>
<dbReference type="FunFam" id="1.10.510.10:FF:000476">
    <property type="entry name" value="PAS domain-containing protein tyrosine kinase family protein"/>
    <property type="match status" value="1"/>
</dbReference>
<dbReference type="FunFam" id="3.30.200.20:FF:000659">
    <property type="entry name" value="SH2-protein kinase domain containing protein"/>
    <property type="match status" value="1"/>
</dbReference>
<dbReference type="Gene3D" id="3.30.200.20">
    <property type="entry name" value="Phosphorylase Kinase, domain 1"/>
    <property type="match status" value="1"/>
</dbReference>
<dbReference type="Gene3D" id="3.30.505.10">
    <property type="entry name" value="SH2 domain"/>
    <property type="match status" value="1"/>
</dbReference>
<dbReference type="Gene3D" id="1.10.510.10">
    <property type="entry name" value="Transferase(Phosphotransferase) domain 1"/>
    <property type="match status" value="1"/>
</dbReference>
<dbReference type="InterPro" id="IPR011009">
    <property type="entry name" value="Kinase-like_dom_sf"/>
</dbReference>
<dbReference type="InterPro" id="IPR000719">
    <property type="entry name" value="Prot_kinase_dom"/>
</dbReference>
<dbReference type="InterPro" id="IPR017441">
    <property type="entry name" value="Protein_kinase_ATP_BS"/>
</dbReference>
<dbReference type="InterPro" id="IPR001245">
    <property type="entry name" value="Ser-Thr/Tyr_kinase_cat_dom"/>
</dbReference>
<dbReference type="InterPro" id="IPR008271">
    <property type="entry name" value="Ser/Thr_kinase_AS"/>
</dbReference>
<dbReference type="InterPro" id="IPR051681">
    <property type="entry name" value="Ser/Thr_Kinases-Pseudokinases"/>
</dbReference>
<dbReference type="InterPro" id="IPR000980">
    <property type="entry name" value="SH2"/>
</dbReference>
<dbReference type="InterPro" id="IPR036860">
    <property type="entry name" value="SH2_dom_sf"/>
</dbReference>
<dbReference type="InterPro" id="IPR035845">
    <property type="entry name" value="ShkD/ShkE_SH2"/>
</dbReference>
<dbReference type="PANTHER" id="PTHR44329:SF53">
    <property type="entry name" value="DUAL SPECIFICITY PROTEIN KINASE SHKD"/>
    <property type="match status" value="1"/>
</dbReference>
<dbReference type="PANTHER" id="PTHR44329">
    <property type="entry name" value="SERINE/THREONINE-PROTEIN KINASE TNNI3K-RELATED"/>
    <property type="match status" value="1"/>
</dbReference>
<dbReference type="Pfam" id="PF07714">
    <property type="entry name" value="PK_Tyr_Ser-Thr"/>
    <property type="match status" value="1"/>
</dbReference>
<dbReference type="Pfam" id="PF00017">
    <property type="entry name" value="SH2"/>
    <property type="match status" value="1"/>
</dbReference>
<dbReference type="SMART" id="SM00220">
    <property type="entry name" value="S_TKc"/>
    <property type="match status" value="1"/>
</dbReference>
<dbReference type="SMART" id="SM00252">
    <property type="entry name" value="SH2"/>
    <property type="match status" value="1"/>
</dbReference>
<dbReference type="SUPFAM" id="SSF56112">
    <property type="entry name" value="Protein kinase-like (PK-like)"/>
    <property type="match status" value="1"/>
</dbReference>
<dbReference type="SUPFAM" id="SSF55550">
    <property type="entry name" value="SH2 domain"/>
    <property type="match status" value="1"/>
</dbReference>
<dbReference type="PROSITE" id="PS00107">
    <property type="entry name" value="PROTEIN_KINASE_ATP"/>
    <property type="match status" value="1"/>
</dbReference>
<dbReference type="PROSITE" id="PS50011">
    <property type="entry name" value="PROTEIN_KINASE_DOM"/>
    <property type="match status" value="1"/>
</dbReference>
<dbReference type="PROSITE" id="PS00108">
    <property type="entry name" value="PROTEIN_KINASE_ST"/>
    <property type="match status" value="1"/>
</dbReference>
<dbReference type="PROSITE" id="PS50001">
    <property type="entry name" value="SH2"/>
    <property type="match status" value="1"/>
</dbReference>
<evidence type="ECO:0000250" key="1"/>
<evidence type="ECO:0000255" key="2">
    <source>
        <dbReference type="PROSITE-ProRule" id="PRU00159"/>
    </source>
</evidence>
<evidence type="ECO:0000255" key="3">
    <source>
        <dbReference type="PROSITE-ProRule" id="PRU00191"/>
    </source>
</evidence>
<evidence type="ECO:0000255" key="4">
    <source>
        <dbReference type="PROSITE-ProRule" id="PRU10027"/>
    </source>
</evidence>
<evidence type="ECO:0000256" key="5">
    <source>
        <dbReference type="SAM" id="MobiDB-lite"/>
    </source>
</evidence>
<comment type="function">
    <text evidence="1">Required for proper chemotaxis and phagocytosis; proper spatiotemporal control of F-actin levels in chemotaxing cells. Negative regulator of the PI3K (phosphatidylinositol 3 kinase) pathway. Predominantly phosphorylates serines and threonines and tyrosines at a lower level (By similarity).</text>
</comment>
<comment type="catalytic activity">
    <reaction>
        <text>L-seryl-[protein] + ATP = O-phospho-L-seryl-[protein] + ADP + H(+)</text>
        <dbReference type="Rhea" id="RHEA:17989"/>
        <dbReference type="Rhea" id="RHEA-COMP:9863"/>
        <dbReference type="Rhea" id="RHEA-COMP:11604"/>
        <dbReference type="ChEBI" id="CHEBI:15378"/>
        <dbReference type="ChEBI" id="CHEBI:29999"/>
        <dbReference type="ChEBI" id="CHEBI:30616"/>
        <dbReference type="ChEBI" id="CHEBI:83421"/>
        <dbReference type="ChEBI" id="CHEBI:456216"/>
        <dbReference type="EC" id="2.7.11.1"/>
    </reaction>
</comment>
<comment type="catalytic activity">
    <reaction>
        <text>L-threonyl-[protein] + ATP = O-phospho-L-threonyl-[protein] + ADP + H(+)</text>
        <dbReference type="Rhea" id="RHEA:46608"/>
        <dbReference type="Rhea" id="RHEA-COMP:11060"/>
        <dbReference type="Rhea" id="RHEA-COMP:11605"/>
        <dbReference type="ChEBI" id="CHEBI:15378"/>
        <dbReference type="ChEBI" id="CHEBI:30013"/>
        <dbReference type="ChEBI" id="CHEBI:30616"/>
        <dbReference type="ChEBI" id="CHEBI:61977"/>
        <dbReference type="ChEBI" id="CHEBI:456216"/>
        <dbReference type="EC" id="2.7.11.1"/>
    </reaction>
</comment>
<comment type="subcellular location">
    <subcellularLocation>
        <location evidence="1">Membrane</location>
    </subcellularLocation>
</comment>
<comment type="similarity">
    <text evidence="2">Belongs to the protein kinase superfamily. Ser/Thr protein kinase family. SH2 domain-containing protein kinase subfamily.</text>
</comment>
<protein>
    <recommendedName>
        <fullName>Dual specificity protein kinase shkD</fullName>
        <ecNumber>2.7.11.1</ecNumber>
    </recommendedName>
    <alternativeName>
        <fullName>SH2 domain-containing protein 4</fullName>
    </alternativeName>
    <alternativeName>
        <fullName>SH2 domain-containing protein D</fullName>
    </alternativeName>
</protein>
<sequence length="744" mass="83535">MKRFFSNLFKRKQDQNSHIKQINGPTTSTPTTTPTTPTTPTTTQTPTPQNNNTNNNTNNNNNTNSNNSNQQKKEQAQASPSTNQTQTPSNNTISTSPTVTTQPSFTPGVISTSKLTTSPPESPRPPTSTTNTTQPSTTTTTATNSTNTNTASAPTKTASPSSPSATASPNNNSNNTTTTAATTTTTTTTTTTTNANQTASVNHTSSDQSLNAQNVTQTNNNNNNNNNNNNNNNANNTKPINPNDYIPLDFVDSTPKVDNNQPKRKASGPPEILPEEIDRTDFLGQGSFGSVYKGKCRGQEVAVKIPRKQKLSLYELTSFRHEVKIMSKIFHPNVVLFLGACTQSGKMQIVTELCQTDLEKLLHNDRTKKEFSLFRRMQMAKDAALGMNWLHGITRIVHNDLKTANLLVDINLRVKVTDFGFSQIKEGEEFQDKAAKGTPLWMAPEVMMGNPYNEKADVYSFGIILWEILTKEAPYSHHKDYDIFFNAICNEKERPPIPADTLPSLRHLIQTCWDHNPQNRPSFSEILFRLNEILIDCAIDFDDGRKYWKEHFLVPKQELQEEVEWSDFEKTLKATHKQLNLDYAPLKELLVQQSHQTVQKTKQVVTMERFDKVSKWFGSFFEPNTGIETIDNINKLSAKIWFHGDIVREQATSRLSKAAEGAFLIRLSSTEPKTCPFTLSMKNNQHRRIQLIDENNFTGFKIQGKTAVYNSLIELVEKCNDYPLLVPCPKFTQETFNPYDPYTN</sequence>
<keyword id="KW-0067">ATP-binding</keyword>
<keyword id="KW-0418">Kinase</keyword>
<keyword id="KW-0472">Membrane</keyword>
<keyword id="KW-0547">Nucleotide-binding</keyword>
<keyword id="KW-1185">Reference proteome</keyword>
<keyword id="KW-0723">Serine/threonine-protein kinase</keyword>
<keyword id="KW-0808">Transferase</keyword>
<keyword id="KW-0829">Tyrosine-protein kinase</keyword>
<accession>Q54U31</accession>
<name>SHKD_DICDI</name>
<organism>
    <name type="scientific">Dictyostelium discoideum</name>
    <name type="common">Social amoeba</name>
    <dbReference type="NCBI Taxonomy" id="44689"/>
    <lineage>
        <taxon>Eukaryota</taxon>
        <taxon>Amoebozoa</taxon>
        <taxon>Evosea</taxon>
        <taxon>Eumycetozoa</taxon>
        <taxon>Dictyostelia</taxon>
        <taxon>Dictyosteliales</taxon>
        <taxon>Dictyosteliaceae</taxon>
        <taxon>Dictyostelium</taxon>
    </lineage>
</organism>
<proteinExistence type="inferred from homology"/>
<feature type="chain" id="PRO_0000327811" description="Dual specificity protein kinase shkD">
    <location>
        <begin position="1"/>
        <end position="744"/>
    </location>
</feature>
<feature type="domain" description="Protein kinase" evidence="2">
    <location>
        <begin position="277"/>
        <end position="534"/>
    </location>
</feature>
<feature type="domain" description="SH2" evidence="3">
    <location>
        <begin position="641"/>
        <end position="734"/>
    </location>
</feature>
<feature type="region of interest" description="Disordered" evidence="5">
    <location>
        <begin position="1"/>
        <end position="276"/>
    </location>
</feature>
<feature type="compositionally biased region" description="Low complexity" evidence="5">
    <location>
        <begin position="25"/>
        <end position="70"/>
    </location>
</feature>
<feature type="compositionally biased region" description="Low complexity" evidence="5">
    <location>
        <begin position="79"/>
        <end position="107"/>
    </location>
</feature>
<feature type="compositionally biased region" description="Low complexity" evidence="5">
    <location>
        <begin position="127"/>
        <end position="200"/>
    </location>
</feature>
<feature type="compositionally biased region" description="Polar residues" evidence="5">
    <location>
        <begin position="201"/>
        <end position="210"/>
    </location>
</feature>
<feature type="compositionally biased region" description="Low complexity" evidence="5">
    <location>
        <begin position="211"/>
        <end position="236"/>
    </location>
</feature>
<feature type="active site" description="Proton acceptor" evidence="2 4">
    <location>
        <position position="400"/>
    </location>
</feature>
<feature type="binding site" evidence="2">
    <location>
        <begin position="283"/>
        <end position="291"/>
    </location>
    <ligand>
        <name>ATP</name>
        <dbReference type="ChEBI" id="CHEBI:30616"/>
    </ligand>
</feature>
<feature type="binding site" evidence="2">
    <location>
        <position position="304"/>
    </location>
    <ligand>
        <name>ATP</name>
        <dbReference type="ChEBI" id="CHEBI:30616"/>
    </ligand>
</feature>